<reference key="1">
    <citation type="journal article" date="2000" name="Nature">
        <title>Complete genome sequence of Pseudomonas aeruginosa PAO1, an opportunistic pathogen.</title>
        <authorList>
            <person name="Stover C.K."/>
            <person name="Pham X.-Q.T."/>
            <person name="Erwin A.L."/>
            <person name="Mizoguchi S.D."/>
            <person name="Warrener P."/>
            <person name="Hickey M.J."/>
            <person name="Brinkman F.S.L."/>
            <person name="Hufnagle W.O."/>
            <person name="Kowalik D.J."/>
            <person name="Lagrou M."/>
            <person name="Garber R.L."/>
            <person name="Goltry L."/>
            <person name="Tolentino E."/>
            <person name="Westbrock-Wadman S."/>
            <person name="Yuan Y."/>
            <person name="Brody L.L."/>
            <person name="Coulter S.N."/>
            <person name="Folger K.R."/>
            <person name="Kas A."/>
            <person name="Larbig K."/>
            <person name="Lim R.M."/>
            <person name="Smith K.A."/>
            <person name="Spencer D.H."/>
            <person name="Wong G.K.-S."/>
            <person name="Wu Z."/>
            <person name="Paulsen I.T."/>
            <person name="Reizer J."/>
            <person name="Saier M.H. Jr."/>
            <person name="Hancock R.E.W."/>
            <person name="Lory S."/>
            <person name="Olson M.V."/>
        </authorList>
    </citation>
    <scope>NUCLEOTIDE SEQUENCE [LARGE SCALE GENOMIC DNA]</scope>
    <source>
        <strain>ATCC 15692 / DSM 22644 / CIP 104116 / JCM 14847 / LMG 12228 / 1C / PRS 101 / PAO1</strain>
    </source>
</reference>
<reference key="2">
    <citation type="journal article" date="2011" name="FEMS Microbiol. Lett.">
        <title>The olsA gene mediates the synthesis of an ornithine lipid in Pseudomonas aeruginosa during growth under phosphate-limiting conditions, but is not involved in antimicrobial peptide susceptibility.</title>
        <authorList>
            <person name="Lewenza S."/>
            <person name="Falsafi R."/>
            <person name="Bains M."/>
            <person name="Rohs P."/>
            <person name="Stupak J."/>
            <person name="Sprott G.D."/>
            <person name="Hancock R.E."/>
        </authorList>
    </citation>
    <scope>PATHWAY</scope>
    <scope>INDUCTION</scope>
    <scope>DISRUPTION PHENOTYPE</scope>
    <source>
        <strain>ATCC 15692 / DSM 22644 / CIP 104116 / JCM 14847 / LMG 12228 / 1C / PRS 101 / PAO1</strain>
    </source>
</reference>
<gene>
    <name evidence="4" type="primary">olsA</name>
    <name evidence="7" type="ordered locus">PA4351</name>
</gene>
<proteinExistence type="evidence at transcript level"/>
<sequence length="258" mass="28305">MARLRLLLRSARLLGLVALGLGLAAWVSLRERLPGADVTPLRQRLTRWWLARLCAALPFEVRVSGEAPRQPMLWVANHVSWTDIPLLGALAPLTFLSKAEVRAWPLAGWLAEKAGTLFIRRGSGDSRLINQRLAEQLHRGRNLLIFPEGTTTNGESLRTFHGRLMASALEAGVAVQPVAISYRRDGVPDAQAPFIGDDDLLSHLGRLLRGERGSVHIQLLEPIPSQGLDRAELARQAQQAVRLALFGTAAPTQTRRAA</sequence>
<protein>
    <recommendedName>
        <fullName evidence="5">Lyso-ornithine lipid O-acyltransferase</fullName>
        <ecNumber evidence="1">2.3.1.270</ecNumber>
    </recommendedName>
</protein>
<feature type="chain" id="PRO_0000452116" description="Lyso-ornithine lipid O-acyltransferase">
    <location>
        <begin position="1"/>
        <end position="258"/>
    </location>
</feature>
<feature type="transmembrane region" description="Helical" evidence="2">
    <location>
        <begin position="7"/>
        <end position="29"/>
    </location>
</feature>
<keyword id="KW-0012">Acyltransferase</keyword>
<keyword id="KW-0444">Lipid biosynthesis</keyword>
<keyword id="KW-0443">Lipid metabolism</keyword>
<keyword id="KW-0472">Membrane</keyword>
<keyword id="KW-1185">Reference proteome</keyword>
<keyword id="KW-0808">Transferase</keyword>
<keyword id="KW-0812">Transmembrane</keyword>
<keyword id="KW-1133">Transmembrane helix</keyword>
<organism>
    <name type="scientific">Pseudomonas aeruginosa (strain ATCC 15692 / DSM 22644 / CIP 104116 / JCM 14847 / LMG 12228 / 1C / PRS 101 / PAO1)</name>
    <dbReference type="NCBI Taxonomy" id="208964"/>
    <lineage>
        <taxon>Bacteria</taxon>
        <taxon>Pseudomonadati</taxon>
        <taxon>Pseudomonadota</taxon>
        <taxon>Gammaproteobacteria</taxon>
        <taxon>Pseudomonadales</taxon>
        <taxon>Pseudomonadaceae</taxon>
        <taxon>Pseudomonas</taxon>
    </lineage>
</organism>
<accession>Q9HW50</accession>
<dbReference type="EC" id="2.3.1.270" evidence="1"/>
<dbReference type="EMBL" id="AE004091">
    <property type="protein sequence ID" value="AAG07739.1"/>
    <property type="molecule type" value="Genomic_DNA"/>
</dbReference>
<dbReference type="PIR" id="G83101">
    <property type="entry name" value="G83101"/>
</dbReference>
<dbReference type="RefSeq" id="NP_253041.1">
    <property type="nucleotide sequence ID" value="NC_002516.2"/>
</dbReference>
<dbReference type="RefSeq" id="WP_003112769.1">
    <property type="nucleotide sequence ID" value="NZ_QZGE01000004.1"/>
</dbReference>
<dbReference type="SMR" id="Q9HW50"/>
<dbReference type="STRING" id="208964.PA4351"/>
<dbReference type="PaxDb" id="208964-PA4351"/>
<dbReference type="GeneID" id="881447"/>
<dbReference type="KEGG" id="pae:PA4351"/>
<dbReference type="PATRIC" id="fig|208964.12.peg.4556"/>
<dbReference type="PseudoCAP" id="PA4351"/>
<dbReference type="HOGENOM" id="CLU_027938_0_1_6"/>
<dbReference type="InParanoid" id="Q9HW50"/>
<dbReference type="OrthoDB" id="9806880at2"/>
<dbReference type="PhylomeDB" id="Q9HW50"/>
<dbReference type="BioCyc" id="PAER208964:G1FZ6-4436-MONOMER"/>
<dbReference type="PHI-base" id="PHI:3788"/>
<dbReference type="Proteomes" id="UP000002438">
    <property type="component" value="Chromosome"/>
</dbReference>
<dbReference type="GO" id="GO:0016020">
    <property type="term" value="C:membrane"/>
    <property type="evidence" value="ECO:0007669"/>
    <property type="project" value="UniProtKB-SubCell"/>
</dbReference>
<dbReference type="GO" id="GO:0003841">
    <property type="term" value="F:1-acylglycerol-3-phosphate O-acyltransferase activity"/>
    <property type="evidence" value="ECO:0000318"/>
    <property type="project" value="GO_Central"/>
</dbReference>
<dbReference type="GO" id="GO:0016036">
    <property type="term" value="P:cellular response to phosphate starvation"/>
    <property type="evidence" value="ECO:0000315"/>
    <property type="project" value="PseudoCAP"/>
</dbReference>
<dbReference type="GO" id="GO:0046467">
    <property type="term" value="P:membrane lipid biosynthetic process"/>
    <property type="evidence" value="ECO:0000315"/>
    <property type="project" value="PseudoCAP"/>
</dbReference>
<dbReference type="GO" id="GO:0006654">
    <property type="term" value="P:phosphatidic acid biosynthetic process"/>
    <property type="evidence" value="ECO:0000318"/>
    <property type="project" value="GO_Central"/>
</dbReference>
<dbReference type="CDD" id="cd07989">
    <property type="entry name" value="LPLAT_AGPAT-like"/>
    <property type="match status" value="1"/>
</dbReference>
<dbReference type="InterPro" id="IPR002123">
    <property type="entry name" value="Plipid/glycerol_acylTrfase"/>
</dbReference>
<dbReference type="PANTHER" id="PTHR10434">
    <property type="entry name" value="1-ACYL-SN-GLYCEROL-3-PHOSPHATE ACYLTRANSFERASE"/>
    <property type="match status" value="1"/>
</dbReference>
<dbReference type="PANTHER" id="PTHR10434:SF64">
    <property type="entry name" value="1-ACYL-SN-GLYCEROL-3-PHOSPHATE ACYLTRANSFERASE-RELATED"/>
    <property type="match status" value="1"/>
</dbReference>
<dbReference type="Pfam" id="PF01553">
    <property type="entry name" value="Acyltransferase"/>
    <property type="match status" value="1"/>
</dbReference>
<dbReference type="SMART" id="SM00563">
    <property type="entry name" value="PlsC"/>
    <property type="match status" value="1"/>
</dbReference>
<dbReference type="SUPFAM" id="SSF69593">
    <property type="entry name" value="Glycerol-3-phosphate (1)-acyltransferase"/>
    <property type="match status" value="1"/>
</dbReference>
<comment type="function">
    <text evidence="1">Catalyzes the second step in the formation of ornithine lipids, which are phosphorus-free membrane lipids. Uses acyl-acyl carrier protein (acyl-AcpP) as an acyl donor and converts lyso-ornithine lipid (LOL) into ornithine lipid (OL).</text>
</comment>
<comment type="catalytic activity">
    <reaction evidence="1">
        <text>a lyso-ornithine lipid + a fatty acyl-[ACP] = an N(2)-[(3R)-3-(acyloxy)acyl]-L-ornithine lipid + holo-[ACP]</text>
        <dbReference type="Rhea" id="RHEA:55760"/>
        <dbReference type="Rhea" id="RHEA-COMP:9685"/>
        <dbReference type="Rhea" id="RHEA-COMP:14125"/>
        <dbReference type="ChEBI" id="CHEBI:64479"/>
        <dbReference type="ChEBI" id="CHEBI:138482"/>
        <dbReference type="ChEBI" id="CHEBI:138651"/>
        <dbReference type="ChEBI" id="CHEBI:140663"/>
        <dbReference type="EC" id="2.3.1.270"/>
    </reaction>
    <physiologicalReaction direction="left-to-right" evidence="1">
        <dbReference type="Rhea" id="RHEA:55761"/>
    </physiologicalReaction>
</comment>
<comment type="pathway">
    <text evidence="6">Lipid metabolism.</text>
</comment>
<comment type="subcellular location">
    <subcellularLocation>
        <location evidence="2">Membrane</location>
        <topology evidence="2">Single-pass membrane protein</topology>
    </subcellularLocation>
</comment>
<comment type="induction">
    <text evidence="3">Induced under phosphate limiting conditions.</text>
</comment>
<comment type="disruption phenotype">
    <text evidence="3">Mutant shows no significant growth defect.</text>
</comment>
<comment type="similarity">
    <text evidence="5">Belongs to the 1-acyl-sn-glycerol-3-phosphate acyltransferase family. OlsA subfamily.</text>
</comment>
<name>OLSA_PSEAE</name>
<evidence type="ECO:0000250" key="1">
    <source>
        <dbReference type="UniProtKB" id="Q7APG1"/>
    </source>
</evidence>
<evidence type="ECO:0000255" key="2"/>
<evidence type="ECO:0000269" key="3">
    <source>
    </source>
</evidence>
<evidence type="ECO:0000303" key="4">
    <source>
    </source>
</evidence>
<evidence type="ECO:0000305" key="5"/>
<evidence type="ECO:0000305" key="6">
    <source>
    </source>
</evidence>
<evidence type="ECO:0000312" key="7">
    <source>
        <dbReference type="EMBL" id="AAG07739.1"/>
    </source>
</evidence>